<protein>
    <recommendedName>
        <fullName evidence="1">4-diphosphocytidyl-2-C-methyl-D-erythritol kinase</fullName>
        <shortName evidence="1">CMK</shortName>
        <ecNumber evidence="1">2.7.1.148</ecNumber>
    </recommendedName>
    <alternativeName>
        <fullName evidence="1">4-(cytidine-5'-diphospho)-2-C-methyl-D-erythritol kinase</fullName>
    </alternativeName>
</protein>
<name>ISPE_BURCJ</name>
<gene>
    <name evidence="1" type="primary">ispE</name>
    <name type="ordered locus">BceJ2315_07940</name>
    <name type="ORF">BCAL0802</name>
</gene>
<reference key="1">
    <citation type="journal article" date="2009" name="J. Bacteriol.">
        <title>The genome of Burkholderia cenocepacia J2315, an epidemic pathogen of cystic fibrosis patients.</title>
        <authorList>
            <person name="Holden M.T."/>
            <person name="Seth-Smith H.M."/>
            <person name="Crossman L.C."/>
            <person name="Sebaihia M."/>
            <person name="Bentley S.D."/>
            <person name="Cerdeno-Tarraga A.M."/>
            <person name="Thomson N.R."/>
            <person name="Bason N."/>
            <person name="Quail M.A."/>
            <person name="Sharp S."/>
            <person name="Cherevach I."/>
            <person name="Churcher C."/>
            <person name="Goodhead I."/>
            <person name="Hauser H."/>
            <person name="Holroyd N."/>
            <person name="Mungall K."/>
            <person name="Scott P."/>
            <person name="Walker D."/>
            <person name="White B."/>
            <person name="Rose H."/>
            <person name="Iversen P."/>
            <person name="Mil-Homens D."/>
            <person name="Rocha E.P."/>
            <person name="Fialho A.M."/>
            <person name="Baldwin A."/>
            <person name="Dowson C."/>
            <person name="Barrell B.G."/>
            <person name="Govan J.R."/>
            <person name="Vandamme P."/>
            <person name="Hart C.A."/>
            <person name="Mahenthiralingam E."/>
            <person name="Parkhill J."/>
        </authorList>
    </citation>
    <scope>NUCLEOTIDE SEQUENCE [LARGE SCALE GENOMIC DNA]</scope>
    <source>
        <strain>ATCC BAA-245 / DSM 16553 / LMG 16656 / NCTC 13227 / J2315 / CF5610</strain>
    </source>
</reference>
<sequence>MTDSTRSLRNCLAPAKLNLFLHITGRRPNGYHDLQSVFQLLNWGDTLHFTLRDDGRVARVTDVPGVPEESDLVVRAANLLKTHTGTAHGVDIEIDKILPMGAGLGGGSSDAATTLLALNRLWQLDLPRAELQSLAVKLGADVPFFIFGKNAFAEGIGEELAEVQLPTRWFLVVTPRVHVPTAEIFSDELLTRDTKPVTIADFLAQQTSDAGWPDSFGRNDMQEVVTRKYAEVAQVVKWLYDVTPARMTGSGASVFAAFHSKHEAEAAKAKLPASWNGAVAESLNEHPLFTFAS</sequence>
<evidence type="ECO:0000255" key="1">
    <source>
        <dbReference type="HAMAP-Rule" id="MF_00061"/>
    </source>
</evidence>
<keyword id="KW-0067">ATP-binding</keyword>
<keyword id="KW-0414">Isoprene biosynthesis</keyword>
<keyword id="KW-0418">Kinase</keyword>
<keyword id="KW-0547">Nucleotide-binding</keyword>
<keyword id="KW-0808">Transferase</keyword>
<dbReference type="EC" id="2.7.1.148" evidence="1"/>
<dbReference type="EMBL" id="AM747720">
    <property type="protein sequence ID" value="CAR51109.1"/>
    <property type="molecule type" value="Genomic_DNA"/>
</dbReference>
<dbReference type="RefSeq" id="WP_006483733.1">
    <property type="nucleotide sequence ID" value="NC_011000.1"/>
</dbReference>
<dbReference type="SMR" id="B4EAR4"/>
<dbReference type="GeneID" id="56559384"/>
<dbReference type="KEGG" id="bcj:BCAL0802"/>
<dbReference type="eggNOG" id="COG1947">
    <property type="taxonomic scope" value="Bacteria"/>
</dbReference>
<dbReference type="HOGENOM" id="CLU_053057_3_0_4"/>
<dbReference type="BioCyc" id="BCEN216591:G1G1V-896-MONOMER"/>
<dbReference type="UniPathway" id="UPA00056">
    <property type="reaction ID" value="UER00094"/>
</dbReference>
<dbReference type="Proteomes" id="UP000001035">
    <property type="component" value="Chromosome 1"/>
</dbReference>
<dbReference type="GO" id="GO:0050515">
    <property type="term" value="F:4-(cytidine 5'-diphospho)-2-C-methyl-D-erythritol kinase activity"/>
    <property type="evidence" value="ECO:0007669"/>
    <property type="project" value="UniProtKB-UniRule"/>
</dbReference>
<dbReference type="GO" id="GO:0005524">
    <property type="term" value="F:ATP binding"/>
    <property type="evidence" value="ECO:0007669"/>
    <property type="project" value="UniProtKB-UniRule"/>
</dbReference>
<dbReference type="GO" id="GO:0019288">
    <property type="term" value="P:isopentenyl diphosphate biosynthetic process, methylerythritol 4-phosphate pathway"/>
    <property type="evidence" value="ECO:0007669"/>
    <property type="project" value="UniProtKB-UniRule"/>
</dbReference>
<dbReference type="GO" id="GO:0016114">
    <property type="term" value="P:terpenoid biosynthetic process"/>
    <property type="evidence" value="ECO:0007669"/>
    <property type="project" value="InterPro"/>
</dbReference>
<dbReference type="Gene3D" id="3.30.230.10">
    <property type="match status" value="1"/>
</dbReference>
<dbReference type="Gene3D" id="3.30.70.890">
    <property type="entry name" value="GHMP kinase, C-terminal domain"/>
    <property type="match status" value="1"/>
</dbReference>
<dbReference type="HAMAP" id="MF_00061">
    <property type="entry name" value="IspE"/>
    <property type="match status" value="1"/>
</dbReference>
<dbReference type="InterPro" id="IPR013750">
    <property type="entry name" value="GHMP_kinase_C_dom"/>
</dbReference>
<dbReference type="InterPro" id="IPR036554">
    <property type="entry name" value="GHMP_kinase_C_sf"/>
</dbReference>
<dbReference type="InterPro" id="IPR006204">
    <property type="entry name" value="GHMP_kinase_N_dom"/>
</dbReference>
<dbReference type="InterPro" id="IPR004424">
    <property type="entry name" value="IspE"/>
</dbReference>
<dbReference type="InterPro" id="IPR020568">
    <property type="entry name" value="Ribosomal_Su5_D2-typ_SF"/>
</dbReference>
<dbReference type="InterPro" id="IPR014721">
    <property type="entry name" value="Ribsml_uS5_D2-typ_fold_subgr"/>
</dbReference>
<dbReference type="NCBIfam" id="TIGR00154">
    <property type="entry name" value="ispE"/>
    <property type="match status" value="1"/>
</dbReference>
<dbReference type="NCBIfam" id="NF011202">
    <property type="entry name" value="PRK14608.1"/>
    <property type="match status" value="1"/>
</dbReference>
<dbReference type="PANTHER" id="PTHR43527">
    <property type="entry name" value="4-DIPHOSPHOCYTIDYL-2-C-METHYL-D-ERYTHRITOL KINASE, CHLOROPLASTIC"/>
    <property type="match status" value="1"/>
</dbReference>
<dbReference type="PANTHER" id="PTHR43527:SF2">
    <property type="entry name" value="4-DIPHOSPHOCYTIDYL-2-C-METHYL-D-ERYTHRITOL KINASE, CHLOROPLASTIC"/>
    <property type="match status" value="1"/>
</dbReference>
<dbReference type="Pfam" id="PF08544">
    <property type="entry name" value="GHMP_kinases_C"/>
    <property type="match status" value="1"/>
</dbReference>
<dbReference type="Pfam" id="PF00288">
    <property type="entry name" value="GHMP_kinases_N"/>
    <property type="match status" value="1"/>
</dbReference>
<dbReference type="PIRSF" id="PIRSF010376">
    <property type="entry name" value="IspE"/>
    <property type="match status" value="1"/>
</dbReference>
<dbReference type="SUPFAM" id="SSF55060">
    <property type="entry name" value="GHMP Kinase, C-terminal domain"/>
    <property type="match status" value="1"/>
</dbReference>
<dbReference type="SUPFAM" id="SSF54211">
    <property type="entry name" value="Ribosomal protein S5 domain 2-like"/>
    <property type="match status" value="1"/>
</dbReference>
<feature type="chain" id="PRO_1000092066" description="4-diphosphocytidyl-2-C-methyl-D-erythritol kinase">
    <location>
        <begin position="1"/>
        <end position="293"/>
    </location>
</feature>
<feature type="active site" evidence="1">
    <location>
        <position position="16"/>
    </location>
</feature>
<feature type="active site" evidence="1">
    <location>
        <position position="141"/>
    </location>
</feature>
<feature type="binding site" evidence="1">
    <location>
        <begin position="99"/>
        <end position="109"/>
    </location>
    <ligand>
        <name>ATP</name>
        <dbReference type="ChEBI" id="CHEBI:30616"/>
    </ligand>
</feature>
<accession>B4EAR4</accession>
<comment type="function">
    <text evidence="1">Catalyzes the phosphorylation of the position 2 hydroxy group of 4-diphosphocytidyl-2C-methyl-D-erythritol.</text>
</comment>
<comment type="catalytic activity">
    <reaction evidence="1">
        <text>4-CDP-2-C-methyl-D-erythritol + ATP = 4-CDP-2-C-methyl-D-erythritol 2-phosphate + ADP + H(+)</text>
        <dbReference type="Rhea" id="RHEA:18437"/>
        <dbReference type="ChEBI" id="CHEBI:15378"/>
        <dbReference type="ChEBI" id="CHEBI:30616"/>
        <dbReference type="ChEBI" id="CHEBI:57823"/>
        <dbReference type="ChEBI" id="CHEBI:57919"/>
        <dbReference type="ChEBI" id="CHEBI:456216"/>
        <dbReference type="EC" id="2.7.1.148"/>
    </reaction>
</comment>
<comment type="pathway">
    <text evidence="1">Isoprenoid biosynthesis; isopentenyl diphosphate biosynthesis via DXP pathway; isopentenyl diphosphate from 1-deoxy-D-xylulose 5-phosphate: step 3/6.</text>
</comment>
<comment type="similarity">
    <text evidence="1">Belongs to the GHMP kinase family. IspE subfamily.</text>
</comment>
<organism>
    <name type="scientific">Burkholderia cenocepacia (strain ATCC BAA-245 / DSM 16553 / LMG 16656 / NCTC 13227 / J2315 / CF5610)</name>
    <name type="common">Burkholderia cepacia (strain J2315)</name>
    <dbReference type="NCBI Taxonomy" id="216591"/>
    <lineage>
        <taxon>Bacteria</taxon>
        <taxon>Pseudomonadati</taxon>
        <taxon>Pseudomonadota</taxon>
        <taxon>Betaproteobacteria</taxon>
        <taxon>Burkholderiales</taxon>
        <taxon>Burkholderiaceae</taxon>
        <taxon>Burkholderia</taxon>
        <taxon>Burkholderia cepacia complex</taxon>
    </lineage>
</organism>
<proteinExistence type="inferred from homology"/>